<evidence type="ECO:0000255" key="1">
    <source>
        <dbReference type="HAMAP-Rule" id="MF_00056"/>
    </source>
</evidence>
<feature type="chain" id="PRO_1000091831" description="2-dehydro-3-deoxyphosphooctonate aldolase">
    <location>
        <begin position="1"/>
        <end position="284"/>
    </location>
</feature>
<organism>
    <name type="scientific">Salmonella enteritidis PT4 (strain P125109)</name>
    <dbReference type="NCBI Taxonomy" id="550537"/>
    <lineage>
        <taxon>Bacteria</taxon>
        <taxon>Pseudomonadati</taxon>
        <taxon>Pseudomonadota</taxon>
        <taxon>Gammaproteobacteria</taxon>
        <taxon>Enterobacterales</taxon>
        <taxon>Enterobacteriaceae</taxon>
        <taxon>Salmonella</taxon>
    </lineage>
</organism>
<name>KDSA_SALEP</name>
<reference key="1">
    <citation type="journal article" date="2008" name="Genome Res.">
        <title>Comparative genome analysis of Salmonella enteritidis PT4 and Salmonella gallinarum 287/91 provides insights into evolutionary and host adaptation pathways.</title>
        <authorList>
            <person name="Thomson N.R."/>
            <person name="Clayton D.J."/>
            <person name="Windhorst D."/>
            <person name="Vernikos G."/>
            <person name="Davidson S."/>
            <person name="Churcher C."/>
            <person name="Quail M.A."/>
            <person name="Stevens M."/>
            <person name="Jones M.A."/>
            <person name="Watson M."/>
            <person name="Barron A."/>
            <person name="Layton A."/>
            <person name="Pickard D."/>
            <person name="Kingsley R.A."/>
            <person name="Bignell A."/>
            <person name="Clark L."/>
            <person name="Harris B."/>
            <person name="Ormond D."/>
            <person name="Abdellah Z."/>
            <person name="Brooks K."/>
            <person name="Cherevach I."/>
            <person name="Chillingworth T."/>
            <person name="Woodward J."/>
            <person name="Norberczak H."/>
            <person name="Lord A."/>
            <person name="Arrowsmith C."/>
            <person name="Jagels K."/>
            <person name="Moule S."/>
            <person name="Mungall K."/>
            <person name="Saunders M."/>
            <person name="Whitehead S."/>
            <person name="Chabalgoity J.A."/>
            <person name="Maskell D."/>
            <person name="Humphreys T."/>
            <person name="Roberts M."/>
            <person name="Barrow P.A."/>
            <person name="Dougan G."/>
            <person name="Parkhill J."/>
        </authorList>
    </citation>
    <scope>NUCLEOTIDE SEQUENCE [LARGE SCALE GENOMIC DNA]</scope>
    <source>
        <strain>P125109</strain>
    </source>
</reference>
<comment type="catalytic activity">
    <reaction evidence="1">
        <text>D-arabinose 5-phosphate + phosphoenolpyruvate + H2O = 3-deoxy-alpha-D-manno-2-octulosonate-8-phosphate + phosphate</text>
        <dbReference type="Rhea" id="RHEA:14053"/>
        <dbReference type="ChEBI" id="CHEBI:15377"/>
        <dbReference type="ChEBI" id="CHEBI:43474"/>
        <dbReference type="ChEBI" id="CHEBI:57693"/>
        <dbReference type="ChEBI" id="CHEBI:58702"/>
        <dbReference type="ChEBI" id="CHEBI:85985"/>
        <dbReference type="EC" id="2.5.1.55"/>
    </reaction>
</comment>
<comment type="pathway">
    <text evidence="1">Carbohydrate biosynthesis; 3-deoxy-D-manno-octulosonate biosynthesis; 3-deoxy-D-manno-octulosonate from D-ribulose 5-phosphate: step 2/3.</text>
</comment>
<comment type="pathway">
    <text evidence="1">Bacterial outer membrane biogenesis; lipopolysaccharide biosynthesis.</text>
</comment>
<comment type="subcellular location">
    <subcellularLocation>
        <location evidence="1">Cytoplasm</location>
    </subcellularLocation>
</comment>
<comment type="similarity">
    <text evidence="1">Belongs to the KdsA family.</text>
</comment>
<accession>B5R3K3</accession>
<keyword id="KW-0963">Cytoplasm</keyword>
<keyword id="KW-0448">Lipopolysaccharide biosynthesis</keyword>
<keyword id="KW-0808">Transferase</keyword>
<protein>
    <recommendedName>
        <fullName evidence="1">2-dehydro-3-deoxyphosphooctonate aldolase</fullName>
        <ecNumber evidence="1">2.5.1.55</ecNumber>
    </recommendedName>
    <alternativeName>
        <fullName evidence="1">3-deoxy-D-manno-octulosonic acid 8-phosphate synthase</fullName>
    </alternativeName>
    <alternativeName>
        <fullName evidence="1">KDO-8-phosphate synthase</fullName>
        <shortName evidence="1">KDO 8-P synthase</shortName>
        <shortName evidence="1">KDOPS</shortName>
    </alternativeName>
    <alternativeName>
        <fullName evidence="1">Phospho-2-dehydro-3-deoxyoctonate aldolase</fullName>
    </alternativeName>
</protein>
<proteinExistence type="inferred from homology"/>
<gene>
    <name evidence="1" type="primary">kdsA</name>
    <name type="ordered locus">SEN1267</name>
</gene>
<sequence>MKQKVVNIGDIKVANDLPFVLFGGMNVLESRDLAMRICEHYVTVTQKLGIPYVFKASFDKANRSSIHSYRGPGLEEGMKIFQELKQTFGVKVITDVHEASQAQPVADVVDVIQLPAFLARQTDLVEAMAKTGAVINVKKPQFVSPGQMGNIVDKFHEGGNDKVILCDRGANFGYDNLVVDMLGFSVMKKVSGNSPVIFDVTHALQCRDPFGAASGGRRGQVTELARAGMAVGLAGLFLESHPDPANAKCDGPSALPLAKLEQFLTQIKAIDDLVKSFDELDTEN</sequence>
<dbReference type="EC" id="2.5.1.55" evidence="1"/>
<dbReference type="EMBL" id="AM933172">
    <property type="protein sequence ID" value="CAR32845.1"/>
    <property type="molecule type" value="Genomic_DNA"/>
</dbReference>
<dbReference type="RefSeq" id="WP_000811046.1">
    <property type="nucleotide sequence ID" value="NC_011294.1"/>
</dbReference>
<dbReference type="SMR" id="B5R3K3"/>
<dbReference type="KEGG" id="set:SEN1267"/>
<dbReference type="HOGENOM" id="CLU_036666_0_0_6"/>
<dbReference type="UniPathway" id="UPA00030"/>
<dbReference type="UniPathway" id="UPA00357">
    <property type="reaction ID" value="UER00474"/>
</dbReference>
<dbReference type="Proteomes" id="UP000000613">
    <property type="component" value="Chromosome"/>
</dbReference>
<dbReference type="GO" id="GO:0005737">
    <property type="term" value="C:cytoplasm"/>
    <property type="evidence" value="ECO:0007669"/>
    <property type="project" value="UniProtKB-SubCell"/>
</dbReference>
<dbReference type="GO" id="GO:0008676">
    <property type="term" value="F:3-deoxy-8-phosphooctulonate synthase activity"/>
    <property type="evidence" value="ECO:0007669"/>
    <property type="project" value="UniProtKB-UniRule"/>
</dbReference>
<dbReference type="GO" id="GO:0019294">
    <property type="term" value="P:keto-3-deoxy-D-manno-octulosonic acid biosynthetic process"/>
    <property type="evidence" value="ECO:0007669"/>
    <property type="project" value="UniProtKB-UniRule"/>
</dbReference>
<dbReference type="FunFam" id="3.20.20.70:FF:000058">
    <property type="entry name" value="2-dehydro-3-deoxyphosphooctonate aldolase"/>
    <property type="match status" value="1"/>
</dbReference>
<dbReference type="Gene3D" id="3.20.20.70">
    <property type="entry name" value="Aldolase class I"/>
    <property type="match status" value="1"/>
</dbReference>
<dbReference type="HAMAP" id="MF_00056">
    <property type="entry name" value="KDO8P_synth"/>
    <property type="match status" value="1"/>
</dbReference>
<dbReference type="InterPro" id="IPR013785">
    <property type="entry name" value="Aldolase_TIM"/>
</dbReference>
<dbReference type="InterPro" id="IPR006218">
    <property type="entry name" value="DAHP1/KDSA"/>
</dbReference>
<dbReference type="InterPro" id="IPR006269">
    <property type="entry name" value="KDO8P_synthase"/>
</dbReference>
<dbReference type="NCBIfam" id="TIGR01362">
    <property type="entry name" value="KDO8P_synth"/>
    <property type="match status" value="1"/>
</dbReference>
<dbReference type="NCBIfam" id="NF003543">
    <property type="entry name" value="PRK05198.1"/>
    <property type="match status" value="1"/>
</dbReference>
<dbReference type="NCBIfam" id="NF009109">
    <property type="entry name" value="PRK12457.1"/>
    <property type="match status" value="1"/>
</dbReference>
<dbReference type="PANTHER" id="PTHR21057">
    <property type="entry name" value="PHOSPHO-2-DEHYDRO-3-DEOXYHEPTONATE ALDOLASE"/>
    <property type="match status" value="1"/>
</dbReference>
<dbReference type="Pfam" id="PF00793">
    <property type="entry name" value="DAHP_synth_1"/>
    <property type="match status" value="1"/>
</dbReference>
<dbReference type="SUPFAM" id="SSF51569">
    <property type="entry name" value="Aldolase"/>
    <property type="match status" value="1"/>
</dbReference>